<gene>
    <name evidence="1" type="primary">plsX</name>
    <name type="ordered locus">ABO_1067</name>
</gene>
<feature type="chain" id="PRO_0000329206" description="Phosphate acyltransferase">
    <location>
        <begin position="1"/>
        <end position="338"/>
    </location>
</feature>
<evidence type="ECO:0000255" key="1">
    <source>
        <dbReference type="HAMAP-Rule" id="MF_00019"/>
    </source>
</evidence>
<evidence type="ECO:0000305" key="2"/>
<name>PLSX_ALCBS</name>
<dbReference type="EC" id="2.3.1.274" evidence="1"/>
<dbReference type="EMBL" id="AM286690">
    <property type="protein sequence ID" value="CAL16515.1"/>
    <property type="status" value="ALT_INIT"/>
    <property type="molecule type" value="Genomic_DNA"/>
</dbReference>
<dbReference type="RefSeq" id="WP_041704922.1">
    <property type="nucleotide sequence ID" value="NC_008260.1"/>
</dbReference>
<dbReference type="SMR" id="Q0VQN3"/>
<dbReference type="STRING" id="393595.ABO_1067"/>
<dbReference type="KEGG" id="abo:ABO_1067"/>
<dbReference type="eggNOG" id="COG0416">
    <property type="taxonomic scope" value="Bacteria"/>
</dbReference>
<dbReference type="HOGENOM" id="CLU_039379_1_0_6"/>
<dbReference type="OrthoDB" id="9806408at2"/>
<dbReference type="UniPathway" id="UPA00085"/>
<dbReference type="Proteomes" id="UP000008871">
    <property type="component" value="Chromosome"/>
</dbReference>
<dbReference type="GO" id="GO:0005737">
    <property type="term" value="C:cytoplasm"/>
    <property type="evidence" value="ECO:0007669"/>
    <property type="project" value="UniProtKB-SubCell"/>
</dbReference>
<dbReference type="GO" id="GO:0043811">
    <property type="term" value="F:phosphate:acyl-[acyl carrier protein] acyltransferase activity"/>
    <property type="evidence" value="ECO:0007669"/>
    <property type="project" value="UniProtKB-UniRule"/>
</dbReference>
<dbReference type="GO" id="GO:0006633">
    <property type="term" value="P:fatty acid biosynthetic process"/>
    <property type="evidence" value="ECO:0007669"/>
    <property type="project" value="UniProtKB-UniRule"/>
</dbReference>
<dbReference type="GO" id="GO:0008654">
    <property type="term" value="P:phospholipid biosynthetic process"/>
    <property type="evidence" value="ECO:0007669"/>
    <property type="project" value="UniProtKB-KW"/>
</dbReference>
<dbReference type="Gene3D" id="3.40.718.10">
    <property type="entry name" value="Isopropylmalate Dehydrogenase"/>
    <property type="match status" value="1"/>
</dbReference>
<dbReference type="HAMAP" id="MF_00019">
    <property type="entry name" value="PlsX"/>
    <property type="match status" value="1"/>
</dbReference>
<dbReference type="InterPro" id="IPR003664">
    <property type="entry name" value="FA_synthesis"/>
</dbReference>
<dbReference type="InterPro" id="IPR012281">
    <property type="entry name" value="Phospholipid_synth_PlsX-like"/>
</dbReference>
<dbReference type="NCBIfam" id="TIGR00182">
    <property type="entry name" value="plsX"/>
    <property type="match status" value="1"/>
</dbReference>
<dbReference type="PANTHER" id="PTHR30100">
    <property type="entry name" value="FATTY ACID/PHOSPHOLIPID SYNTHESIS PROTEIN PLSX"/>
    <property type="match status" value="1"/>
</dbReference>
<dbReference type="PANTHER" id="PTHR30100:SF1">
    <property type="entry name" value="PHOSPHATE ACYLTRANSFERASE"/>
    <property type="match status" value="1"/>
</dbReference>
<dbReference type="Pfam" id="PF02504">
    <property type="entry name" value="FA_synthesis"/>
    <property type="match status" value="1"/>
</dbReference>
<dbReference type="PIRSF" id="PIRSF002465">
    <property type="entry name" value="Phsphlp_syn_PlsX"/>
    <property type="match status" value="1"/>
</dbReference>
<dbReference type="SUPFAM" id="SSF53659">
    <property type="entry name" value="Isocitrate/Isopropylmalate dehydrogenase-like"/>
    <property type="match status" value="1"/>
</dbReference>
<protein>
    <recommendedName>
        <fullName evidence="1">Phosphate acyltransferase</fullName>
        <ecNumber evidence="1">2.3.1.274</ecNumber>
    </recommendedName>
    <alternativeName>
        <fullName evidence="1">Acyl-ACP phosphotransacylase</fullName>
    </alternativeName>
    <alternativeName>
        <fullName evidence="1">Acyl-[acyl-carrier-protein]--phosphate acyltransferase</fullName>
    </alternativeName>
    <alternativeName>
        <fullName evidence="1">Phosphate-acyl-ACP acyltransferase</fullName>
    </alternativeName>
</protein>
<keyword id="KW-0963">Cytoplasm</keyword>
<keyword id="KW-0444">Lipid biosynthesis</keyword>
<keyword id="KW-0443">Lipid metabolism</keyword>
<keyword id="KW-0594">Phospholipid biosynthesis</keyword>
<keyword id="KW-1208">Phospholipid metabolism</keyword>
<keyword id="KW-1185">Reference proteome</keyword>
<keyword id="KW-0808">Transferase</keyword>
<proteinExistence type="inferred from homology"/>
<accession>Q0VQN3</accession>
<organism>
    <name type="scientific">Alcanivorax borkumensis (strain ATCC 700651 / DSM 11573 / NCIMB 13689 / SK2)</name>
    <dbReference type="NCBI Taxonomy" id="393595"/>
    <lineage>
        <taxon>Bacteria</taxon>
        <taxon>Pseudomonadati</taxon>
        <taxon>Pseudomonadota</taxon>
        <taxon>Gammaproteobacteria</taxon>
        <taxon>Oceanospirillales</taxon>
        <taxon>Alcanivoracaceae</taxon>
        <taxon>Alcanivorax</taxon>
    </lineage>
</organism>
<sequence length="338" mass="35624">MPVVTLAVDAMGGDHGLSVTVPAVAAMLSRHEHMHIILVGQLEPLTSALSQANIADHPRITVQPATEVVAMDDPVAVALRQKKDSSMRVAINMVKEGRAQAAVSAGNTGALMAVSRFVLKTLPGVDRPAICTAIPTANGHCHMLDLGANVDSEPAHLLQFALMGQAVVRAVDGVEHPRVALLNIGEEDIKGNEQIKEAAGLLREAQGLNYVGFVEGNGIFSGEADVVVCDGFVGNVSLKTMEGVAKMIGNMLRQEIKQSWLRKLCGLFALPVLIGLKKRMDPDHYNGASLVGLRGVVVKSHGGTSKEGFACALEVAQLEARRNVPSLISDALGQPGTH</sequence>
<reference key="1">
    <citation type="journal article" date="2006" name="Nat. Biotechnol.">
        <title>Genome sequence of the ubiquitous hydrocarbon-degrading marine bacterium Alcanivorax borkumensis.</title>
        <authorList>
            <person name="Schneiker S."/>
            <person name="Martins dos Santos V.A.P."/>
            <person name="Bartels D."/>
            <person name="Bekel T."/>
            <person name="Brecht M."/>
            <person name="Buhrmester J."/>
            <person name="Chernikova T.N."/>
            <person name="Denaro R."/>
            <person name="Ferrer M."/>
            <person name="Gertler C."/>
            <person name="Goesmann A."/>
            <person name="Golyshina O.V."/>
            <person name="Kaminski F."/>
            <person name="Khachane A.N."/>
            <person name="Lang S."/>
            <person name="Linke B."/>
            <person name="McHardy A.C."/>
            <person name="Meyer F."/>
            <person name="Nechitaylo T."/>
            <person name="Puehler A."/>
            <person name="Regenhardt D."/>
            <person name="Rupp O."/>
            <person name="Sabirova J.S."/>
            <person name="Selbitschka W."/>
            <person name="Yakimov M.M."/>
            <person name="Timmis K.N."/>
            <person name="Vorhoelter F.-J."/>
            <person name="Weidner S."/>
            <person name="Kaiser O."/>
            <person name="Golyshin P.N."/>
        </authorList>
    </citation>
    <scope>NUCLEOTIDE SEQUENCE [LARGE SCALE GENOMIC DNA]</scope>
    <source>
        <strain>ATCC 700651 / DSM 11573 / NCIMB 13689 / SK2</strain>
    </source>
</reference>
<comment type="function">
    <text evidence="1">Catalyzes the reversible formation of acyl-phosphate (acyl-PO(4)) from acyl-[acyl-carrier-protein] (acyl-ACP). This enzyme utilizes acyl-ACP as fatty acyl donor, but not acyl-CoA.</text>
</comment>
<comment type="catalytic activity">
    <reaction evidence="1">
        <text>a fatty acyl-[ACP] + phosphate = an acyl phosphate + holo-[ACP]</text>
        <dbReference type="Rhea" id="RHEA:42292"/>
        <dbReference type="Rhea" id="RHEA-COMP:9685"/>
        <dbReference type="Rhea" id="RHEA-COMP:14125"/>
        <dbReference type="ChEBI" id="CHEBI:43474"/>
        <dbReference type="ChEBI" id="CHEBI:59918"/>
        <dbReference type="ChEBI" id="CHEBI:64479"/>
        <dbReference type="ChEBI" id="CHEBI:138651"/>
        <dbReference type="EC" id="2.3.1.274"/>
    </reaction>
</comment>
<comment type="pathway">
    <text evidence="1">Lipid metabolism; phospholipid metabolism.</text>
</comment>
<comment type="subunit">
    <text evidence="1">Homodimer. Probably interacts with PlsY.</text>
</comment>
<comment type="subcellular location">
    <subcellularLocation>
        <location evidence="1">Cytoplasm</location>
    </subcellularLocation>
    <text evidence="1">Associated with the membrane possibly through PlsY.</text>
</comment>
<comment type="similarity">
    <text evidence="1">Belongs to the PlsX family.</text>
</comment>
<comment type="sequence caution" evidence="2">
    <conflict type="erroneous initiation">
        <sequence resource="EMBL-CDS" id="CAL16515"/>
    </conflict>
</comment>